<keyword id="KW-0975">Bacterial flagellum</keyword>
<keyword id="KW-0903">Direct protein sequencing</keyword>
<keyword id="KW-0574">Periplasm</keyword>
<protein>
    <recommendedName>
        <fullName>Flagellar filament outer layer protein flaA2</fullName>
    </recommendedName>
    <alternativeName>
        <fullName>35 kDa sheath protein</fullName>
    </alternativeName>
</protein>
<dbReference type="GO" id="GO:0055040">
    <property type="term" value="C:periplasmic flagellum"/>
    <property type="evidence" value="ECO:0007669"/>
    <property type="project" value="UniProtKB-SubCell"/>
</dbReference>
<sequence>ETVPYMFEN</sequence>
<organism>
    <name type="scientific">Brachyspira hyodysenteriae</name>
    <name type="common">Treponema hyodysenteriae</name>
    <dbReference type="NCBI Taxonomy" id="159"/>
    <lineage>
        <taxon>Bacteria</taxon>
        <taxon>Pseudomonadati</taxon>
        <taxon>Spirochaetota</taxon>
        <taxon>Spirochaetia</taxon>
        <taxon>Brachyspirales</taxon>
        <taxon>Brachyspiraceae</taxon>
        <taxon>Brachyspira</taxon>
    </lineage>
</organism>
<reference key="1">
    <citation type="journal article" date="1992" name="J. Gen. Microbiol.">
        <title>The periplasmic flagella of Serpulina (Treponema) hyodysenteriae are composed of two sheath proteins and three core proteins.</title>
        <authorList>
            <person name="Koopman M.B.H."/>
            <person name="Baats E."/>
            <person name="van Vorstenbosch C.J.A.H.V."/>
            <person name="van der Zeijst B.A.M."/>
            <person name="Kusters J.G."/>
        </authorList>
    </citation>
    <scope>PROTEIN SEQUENCE</scope>
    <source>
        <strain>C5</strain>
    </source>
</reference>
<accession>P80159</accession>
<comment type="function">
    <text>Component of the outer layer of the flagella.</text>
</comment>
<comment type="subunit">
    <text>The flagellum consists of an outer layer composed of two sheath proteins, flaA1 (44 kDa) and flaA2 (35 kDa) around a core that contains three proteins flaB1 (37 kDa), flaB2 (34 kDa) and flaB3 (32 kDa).</text>
</comment>
<comment type="subcellular location">
    <subcellularLocation>
        <location>Periplasmic flagellum</location>
    </subcellularLocation>
    <subcellularLocation>
        <location>Periplasm</location>
    </subcellularLocation>
</comment>
<name>FLAA2_BRAHO</name>
<feature type="chain" id="PRO_0000180986" description="Flagellar filament outer layer protein flaA2">
    <location>
        <begin position="1"/>
        <end position="9" status="greater than"/>
    </location>
</feature>
<feature type="unsure residue">
    <location>
        <position position="2"/>
    </location>
</feature>
<feature type="unsure residue">
    <location>
        <begin position="8"/>
        <end position="9"/>
    </location>
</feature>
<feature type="non-terminal residue">
    <location>
        <position position="9"/>
    </location>
</feature>
<proteinExistence type="evidence at protein level"/>
<gene>
    <name type="primary">flaA2</name>
</gene>